<protein>
    <recommendedName>
        <fullName evidence="1">UPF0145 protein Ent638_1382</fullName>
    </recommendedName>
</protein>
<sequence>MQFSTTPTLEGQPIVEYCGVVTGEAILGANIFRDFFAGIRDIVGGRSGAYEKELRKAREIAFKELGEQAKALGADAVVGIDIDYETVGKDASMLMVSVSGTAVKTRR</sequence>
<evidence type="ECO:0000255" key="1">
    <source>
        <dbReference type="HAMAP-Rule" id="MF_00338"/>
    </source>
</evidence>
<feature type="chain" id="PRO_1000059730" description="UPF0145 protein Ent638_1382">
    <location>
        <begin position="1"/>
        <end position="107"/>
    </location>
</feature>
<accession>A4W8N3</accession>
<organism>
    <name type="scientific">Enterobacter sp. (strain 638)</name>
    <dbReference type="NCBI Taxonomy" id="399742"/>
    <lineage>
        <taxon>Bacteria</taxon>
        <taxon>Pseudomonadati</taxon>
        <taxon>Pseudomonadota</taxon>
        <taxon>Gammaproteobacteria</taxon>
        <taxon>Enterobacterales</taxon>
        <taxon>Enterobacteriaceae</taxon>
        <taxon>Enterobacter</taxon>
    </lineage>
</organism>
<proteinExistence type="inferred from homology"/>
<name>Y1382_ENT38</name>
<gene>
    <name type="ordered locus">Ent638_1382</name>
</gene>
<comment type="similarity">
    <text evidence="1">Belongs to the UPF0145 family.</text>
</comment>
<reference key="1">
    <citation type="journal article" date="2010" name="PLoS Genet.">
        <title>Genome sequence of the plant growth promoting endophytic bacterium Enterobacter sp. 638.</title>
        <authorList>
            <person name="Taghavi S."/>
            <person name="van der Lelie D."/>
            <person name="Hoffman A."/>
            <person name="Zhang Y.B."/>
            <person name="Walla M.D."/>
            <person name="Vangronsveld J."/>
            <person name="Newman L."/>
            <person name="Monchy S."/>
        </authorList>
    </citation>
    <scope>NUCLEOTIDE SEQUENCE [LARGE SCALE GENOMIC DNA]</scope>
    <source>
        <strain>638</strain>
    </source>
</reference>
<dbReference type="EMBL" id="CP000653">
    <property type="protein sequence ID" value="ABP60063.1"/>
    <property type="molecule type" value="Genomic_DNA"/>
</dbReference>
<dbReference type="RefSeq" id="WP_012016782.1">
    <property type="nucleotide sequence ID" value="NC_009436.1"/>
</dbReference>
<dbReference type="SMR" id="A4W8N3"/>
<dbReference type="STRING" id="399742.Ent638_1382"/>
<dbReference type="KEGG" id="ent:Ent638_1382"/>
<dbReference type="eggNOG" id="COG0393">
    <property type="taxonomic scope" value="Bacteria"/>
</dbReference>
<dbReference type="HOGENOM" id="CLU_117144_3_0_6"/>
<dbReference type="OrthoDB" id="9796448at2"/>
<dbReference type="Proteomes" id="UP000000230">
    <property type="component" value="Chromosome"/>
</dbReference>
<dbReference type="Gene3D" id="3.30.110.70">
    <property type="entry name" value="Hypothetical protein apc22750. Chain B"/>
    <property type="match status" value="1"/>
</dbReference>
<dbReference type="HAMAP" id="MF_00338">
    <property type="entry name" value="UPF0145"/>
    <property type="match status" value="1"/>
</dbReference>
<dbReference type="InterPro" id="IPR035439">
    <property type="entry name" value="UPF0145_dom_sf"/>
</dbReference>
<dbReference type="InterPro" id="IPR002765">
    <property type="entry name" value="UPF0145_YbjQ-like"/>
</dbReference>
<dbReference type="NCBIfam" id="NF002776">
    <property type="entry name" value="PRK02877.1"/>
    <property type="match status" value="1"/>
</dbReference>
<dbReference type="PANTHER" id="PTHR34068">
    <property type="entry name" value="UPF0145 PROTEIN YBJQ"/>
    <property type="match status" value="1"/>
</dbReference>
<dbReference type="PANTHER" id="PTHR34068:SF1">
    <property type="entry name" value="UPF0145 PROTEIN YBJQ"/>
    <property type="match status" value="1"/>
</dbReference>
<dbReference type="Pfam" id="PF01906">
    <property type="entry name" value="YbjQ_1"/>
    <property type="match status" value="1"/>
</dbReference>
<dbReference type="SUPFAM" id="SSF117782">
    <property type="entry name" value="YbjQ-like"/>
    <property type="match status" value="1"/>
</dbReference>